<keyword id="KW-0687">Ribonucleoprotein</keyword>
<keyword id="KW-0689">Ribosomal protein</keyword>
<keyword id="KW-0694">RNA-binding</keyword>
<keyword id="KW-0699">rRNA-binding</keyword>
<dbReference type="EMBL" id="CP000720">
    <property type="protein sequence ID" value="ABS46405.1"/>
    <property type="molecule type" value="Genomic_DNA"/>
</dbReference>
<dbReference type="RefSeq" id="WP_049756389.1">
    <property type="nucleotide sequence ID" value="NC_009708.1"/>
</dbReference>
<dbReference type="SMR" id="A7FNM6"/>
<dbReference type="KEGG" id="ypi:YpsIP31758_3906"/>
<dbReference type="HOGENOM" id="CLU_073626_1_1_6"/>
<dbReference type="Proteomes" id="UP000002412">
    <property type="component" value="Chromosome"/>
</dbReference>
<dbReference type="GO" id="GO:0022627">
    <property type="term" value="C:cytosolic small ribosomal subunit"/>
    <property type="evidence" value="ECO:0007669"/>
    <property type="project" value="TreeGrafter"/>
</dbReference>
<dbReference type="GO" id="GO:0019843">
    <property type="term" value="F:rRNA binding"/>
    <property type="evidence" value="ECO:0007669"/>
    <property type="project" value="UniProtKB-UniRule"/>
</dbReference>
<dbReference type="GO" id="GO:0003735">
    <property type="term" value="F:structural constituent of ribosome"/>
    <property type="evidence" value="ECO:0007669"/>
    <property type="project" value="InterPro"/>
</dbReference>
<dbReference type="GO" id="GO:0006412">
    <property type="term" value="P:translation"/>
    <property type="evidence" value="ECO:0007669"/>
    <property type="project" value="UniProtKB-UniRule"/>
</dbReference>
<dbReference type="CDD" id="cd00364">
    <property type="entry name" value="Ribosomal_uS17"/>
    <property type="match status" value="1"/>
</dbReference>
<dbReference type="FunFam" id="2.40.50.140:FF:000014">
    <property type="entry name" value="30S ribosomal protein S17"/>
    <property type="match status" value="1"/>
</dbReference>
<dbReference type="Gene3D" id="2.40.50.140">
    <property type="entry name" value="Nucleic acid-binding proteins"/>
    <property type="match status" value="1"/>
</dbReference>
<dbReference type="HAMAP" id="MF_01345_B">
    <property type="entry name" value="Ribosomal_uS17_B"/>
    <property type="match status" value="1"/>
</dbReference>
<dbReference type="InterPro" id="IPR012340">
    <property type="entry name" value="NA-bd_OB-fold"/>
</dbReference>
<dbReference type="InterPro" id="IPR000266">
    <property type="entry name" value="Ribosomal_uS17"/>
</dbReference>
<dbReference type="InterPro" id="IPR019984">
    <property type="entry name" value="Ribosomal_uS17_bact/chlr"/>
</dbReference>
<dbReference type="InterPro" id="IPR019979">
    <property type="entry name" value="Ribosomal_uS17_CS"/>
</dbReference>
<dbReference type="NCBIfam" id="NF004123">
    <property type="entry name" value="PRK05610.1"/>
    <property type="match status" value="1"/>
</dbReference>
<dbReference type="NCBIfam" id="TIGR03635">
    <property type="entry name" value="uS17_bact"/>
    <property type="match status" value="1"/>
</dbReference>
<dbReference type="PANTHER" id="PTHR10744">
    <property type="entry name" value="40S RIBOSOMAL PROTEIN S11 FAMILY MEMBER"/>
    <property type="match status" value="1"/>
</dbReference>
<dbReference type="PANTHER" id="PTHR10744:SF1">
    <property type="entry name" value="SMALL RIBOSOMAL SUBUNIT PROTEIN US17M"/>
    <property type="match status" value="1"/>
</dbReference>
<dbReference type="Pfam" id="PF00366">
    <property type="entry name" value="Ribosomal_S17"/>
    <property type="match status" value="1"/>
</dbReference>
<dbReference type="PRINTS" id="PR00973">
    <property type="entry name" value="RIBOSOMALS17"/>
</dbReference>
<dbReference type="SUPFAM" id="SSF50249">
    <property type="entry name" value="Nucleic acid-binding proteins"/>
    <property type="match status" value="1"/>
</dbReference>
<dbReference type="PROSITE" id="PS00056">
    <property type="entry name" value="RIBOSOMAL_S17"/>
    <property type="match status" value="1"/>
</dbReference>
<feature type="chain" id="PRO_1000067706" description="Small ribosomal subunit protein uS17">
    <location>
        <begin position="1"/>
        <end position="88"/>
    </location>
</feature>
<proteinExistence type="inferred from homology"/>
<accession>A7FNM6</accession>
<organism>
    <name type="scientific">Yersinia pseudotuberculosis serotype O:1b (strain IP 31758)</name>
    <dbReference type="NCBI Taxonomy" id="349747"/>
    <lineage>
        <taxon>Bacteria</taxon>
        <taxon>Pseudomonadati</taxon>
        <taxon>Pseudomonadota</taxon>
        <taxon>Gammaproteobacteria</taxon>
        <taxon>Enterobacterales</taxon>
        <taxon>Yersiniaceae</taxon>
        <taxon>Yersinia</taxon>
    </lineage>
</organism>
<sequence>MTDQIRTLQGRVVSDKMEKSMVVAIERVVKHPIYGKFIRRTTKLHVHDENNECGIGDVVEIRECRPLSKTKSWTLVVPRKPPARLGVQ</sequence>
<comment type="function">
    <text evidence="1">One of the primary rRNA binding proteins, it binds specifically to the 5'-end of 16S ribosomal RNA.</text>
</comment>
<comment type="subunit">
    <text evidence="1">Part of the 30S ribosomal subunit.</text>
</comment>
<comment type="similarity">
    <text evidence="1">Belongs to the universal ribosomal protein uS17 family.</text>
</comment>
<evidence type="ECO:0000255" key="1">
    <source>
        <dbReference type="HAMAP-Rule" id="MF_01345"/>
    </source>
</evidence>
<evidence type="ECO:0000305" key="2"/>
<protein>
    <recommendedName>
        <fullName evidence="1">Small ribosomal subunit protein uS17</fullName>
    </recommendedName>
    <alternativeName>
        <fullName evidence="2">30S ribosomal protein S17</fullName>
    </alternativeName>
</protein>
<reference key="1">
    <citation type="journal article" date="2007" name="PLoS Genet.">
        <title>The complete genome sequence of Yersinia pseudotuberculosis IP31758, the causative agent of Far East scarlet-like fever.</title>
        <authorList>
            <person name="Eppinger M."/>
            <person name="Rosovitz M.J."/>
            <person name="Fricke W.F."/>
            <person name="Rasko D.A."/>
            <person name="Kokorina G."/>
            <person name="Fayolle C."/>
            <person name="Lindler L.E."/>
            <person name="Carniel E."/>
            <person name="Ravel J."/>
        </authorList>
    </citation>
    <scope>NUCLEOTIDE SEQUENCE [LARGE SCALE GENOMIC DNA]</scope>
    <source>
        <strain>IP 31758</strain>
    </source>
</reference>
<gene>
    <name evidence="1" type="primary">rpsQ</name>
    <name type="ordered locus">YpsIP31758_3906</name>
</gene>
<name>RS17_YERP3</name>